<gene>
    <name evidence="1" type="primary">rplT</name>
    <name type="ordered locus">FP0892</name>
</gene>
<proteinExistence type="inferred from homology"/>
<name>RL20_FLAPJ</name>
<comment type="function">
    <text evidence="1">Binds directly to 23S ribosomal RNA and is necessary for the in vitro assembly process of the 50S ribosomal subunit. It is not involved in the protein synthesizing functions of that subunit.</text>
</comment>
<comment type="similarity">
    <text evidence="1">Belongs to the bacterial ribosomal protein bL20 family.</text>
</comment>
<reference key="1">
    <citation type="journal article" date="2007" name="Nat. Biotechnol.">
        <title>Complete genome sequence of the fish pathogen Flavobacterium psychrophilum.</title>
        <authorList>
            <person name="Duchaud E."/>
            <person name="Boussaha M."/>
            <person name="Loux V."/>
            <person name="Bernardet J.-F."/>
            <person name="Michel C."/>
            <person name="Kerouault B."/>
            <person name="Mondot S."/>
            <person name="Nicolas P."/>
            <person name="Bossy R."/>
            <person name="Caron C."/>
            <person name="Bessieres P."/>
            <person name="Gibrat J.-F."/>
            <person name="Claverol S."/>
            <person name="Dumetz F."/>
            <person name="Le Henaff M."/>
            <person name="Benmansour A."/>
        </authorList>
    </citation>
    <scope>NUCLEOTIDE SEQUENCE [LARGE SCALE GENOMIC DNA]</scope>
    <source>
        <strain>ATCC 49511 / DSM 21280 / CIP 103535 / JIP02/86</strain>
    </source>
</reference>
<keyword id="KW-1185">Reference proteome</keyword>
<keyword id="KW-0687">Ribonucleoprotein</keyword>
<keyword id="KW-0689">Ribosomal protein</keyword>
<keyword id="KW-0694">RNA-binding</keyword>
<keyword id="KW-0699">rRNA-binding</keyword>
<sequence length="114" mass="13323">MPRSVNSVAKRARRKKIMKQAKGFFGRRKNVWTVAKNAVEKAMCYAYRDRKVNKRNFRALWIQRINAGARLEGMSYSQFMGKVKKHNIELNRKVLADLAMNHPVAFKTILNKVK</sequence>
<organism>
    <name type="scientific">Flavobacterium psychrophilum (strain ATCC 49511 / DSM 21280 / CIP 103535 / JIP02/86)</name>
    <dbReference type="NCBI Taxonomy" id="402612"/>
    <lineage>
        <taxon>Bacteria</taxon>
        <taxon>Pseudomonadati</taxon>
        <taxon>Bacteroidota</taxon>
        <taxon>Flavobacteriia</taxon>
        <taxon>Flavobacteriales</taxon>
        <taxon>Flavobacteriaceae</taxon>
        <taxon>Flavobacterium</taxon>
    </lineage>
</organism>
<protein>
    <recommendedName>
        <fullName evidence="1">Large ribosomal subunit protein bL20</fullName>
    </recommendedName>
    <alternativeName>
        <fullName evidence="2">50S ribosomal protein L20</fullName>
    </alternativeName>
</protein>
<dbReference type="EMBL" id="AM398681">
    <property type="protein sequence ID" value="CAL42992.1"/>
    <property type="molecule type" value="Genomic_DNA"/>
</dbReference>
<dbReference type="RefSeq" id="WP_011963048.1">
    <property type="nucleotide sequence ID" value="NC_009613.3"/>
</dbReference>
<dbReference type="RefSeq" id="YP_001295808.1">
    <property type="nucleotide sequence ID" value="NC_009613.3"/>
</dbReference>
<dbReference type="SMR" id="A6GY19"/>
<dbReference type="STRING" id="402612.FP0892"/>
<dbReference type="EnsemblBacteria" id="CAL42992">
    <property type="protein sequence ID" value="CAL42992"/>
    <property type="gene ID" value="FP0892"/>
</dbReference>
<dbReference type="GeneID" id="66552486"/>
<dbReference type="KEGG" id="fps:FP0892"/>
<dbReference type="PATRIC" id="fig|402612.5.peg.909"/>
<dbReference type="eggNOG" id="COG0292">
    <property type="taxonomic scope" value="Bacteria"/>
</dbReference>
<dbReference type="HOGENOM" id="CLU_123265_0_1_10"/>
<dbReference type="OrthoDB" id="9808966at2"/>
<dbReference type="Proteomes" id="UP000006394">
    <property type="component" value="Chromosome"/>
</dbReference>
<dbReference type="GO" id="GO:1990904">
    <property type="term" value="C:ribonucleoprotein complex"/>
    <property type="evidence" value="ECO:0007669"/>
    <property type="project" value="UniProtKB-KW"/>
</dbReference>
<dbReference type="GO" id="GO:0005840">
    <property type="term" value="C:ribosome"/>
    <property type="evidence" value="ECO:0007669"/>
    <property type="project" value="UniProtKB-KW"/>
</dbReference>
<dbReference type="GO" id="GO:0019843">
    <property type="term" value="F:rRNA binding"/>
    <property type="evidence" value="ECO:0007669"/>
    <property type="project" value="UniProtKB-UniRule"/>
</dbReference>
<dbReference type="GO" id="GO:0003735">
    <property type="term" value="F:structural constituent of ribosome"/>
    <property type="evidence" value="ECO:0007669"/>
    <property type="project" value="InterPro"/>
</dbReference>
<dbReference type="GO" id="GO:0000027">
    <property type="term" value="P:ribosomal large subunit assembly"/>
    <property type="evidence" value="ECO:0007669"/>
    <property type="project" value="UniProtKB-UniRule"/>
</dbReference>
<dbReference type="GO" id="GO:0006412">
    <property type="term" value="P:translation"/>
    <property type="evidence" value="ECO:0007669"/>
    <property type="project" value="InterPro"/>
</dbReference>
<dbReference type="CDD" id="cd07026">
    <property type="entry name" value="Ribosomal_L20"/>
    <property type="match status" value="1"/>
</dbReference>
<dbReference type="FunFam" id="1.10.1900.20:FF:000001">
    <property type="entry name" value="50S ribosomal protein L20"/>
    <property type="match status" value="1"/>
</dbReference>
<dbReference type="Gene3D" id="6.10.160.10">
    <property type="match status" value="1"/>
</dbReference>
<dbReference type="Gene3D" id="1.10.1900.20">
    <property type="entry name" value="Ribosomal protein L20"/>
    <property type="match status" value="1"/>
</dbReference>
<dbReference type="HAMAP" id="MF_00382">
    <property type="entry name" value="Ribosomal_bL20"/>
    <property type="match status" value="1"/>
</dbReference>
<dbReference type="InterPro" id="IPR005813">
    <property type="entry name" value="Ribosomal_bL20"/>
</dbReference>
<dbReference type="InterPro" id="IPR049946">
    <property type="entry name" value="RIBOSOMAL_L20_CS"/>
</dbReference>
<dbReference type="InterPro" id="IPR035566">
    <property type="entry name" value="Ribosomal_protein_bL20_C"/>
</dbReference>
<dbReference type="NCBIfam" id="TIGR01032">
    <property type="entry name" value="rplT_bact"/>
    <property type="match status" value="1"/>
</dbReference>
<dbReference type="PANTHER" id="PTHR10986">
    <property type="entry name" value="39S RIBOSOMAL PROTEIN L20"/>
    <property type="match status" value="1"/>
</dbReference>
<dbReference type="Pfam" id="PF00453">
    <property type="entry name" value="Ribosomal_L20"/>
    <property type="match status" value="1"/>
</dbReference>
<dbReference type="PRINTS" id="PR00062">
    <property type="entry name" value="RIBOSOMALL20"/>
</dbReference>
<dbReference type="SUPFAM" id="SSF74731">
    <property type="entry name" value="Ribosomal protein L20"/>
    <property type="match status" value="1"/>
</dbReference>
<dbReference type="PROSITE" id="PS00937">
    <property type="entry name" value="RIBOSOMAL_L20"/>
    <property type="match status" value="1"/>
</dbReference>
<feature type="chain" id="PRO_1000048976" description="Large ribosomal subunit protein bL20">
    <location>
        <begin position="1"/>
        <end position="114"/>
    </location>
</feature>
<evidence type="ECO:0000255" key="1">
    <source>
        <dbReference type="HAMAP-Rule" id="MF_00382"/>
    </source>
</evidence>
<evidence type="ECO:0000305" key="2"/>
<accession>A6GY19</accession>